<comment type="similarity">
    <text evidence="1">Belongs to the UPF0250 family.</text>
</comment>
<accession>Q1C509</accession>
<dbReference type="EMBL" id="CP000308">
    <property type="protein sequence ID" value="ABG14463.1"/>
    <property type="molecule type" value="Genomic_DNA"/>
</dbReference>
<dbReference type="SMR" id="Q1C509"/>
<dbReference type="KEGG" id="ypa:YPA_2499"/>
<dbReference type="Proteomes" id="UP000001971">
    <property type="component" value="Chromosome"/>
</dbReference>
<dbReference type="GO" id="GO:0005829">
    <property type="term" value="C:cytosol"/>
    <property type="evidence" value="ECO:0007669"/>
    <property type="project" value="TreeGrafter"/>
</dbReference>
<dbReference type="FunFam" id="3.30.70.260:FF:000002">
    <property type="entry name" value="UPF0250 protein YbeD"/>
    <property type="match status" value="1"/>
</dbReference>
<dbReference type="Gene3D" id="3.30.70.260">
    <property type="match status" value="1"/>
</dbReference>
<dbReference type="HAMAP" id="MF_00659">
    <property type="entry name" value="UPF0250"/>
    <property type="match status" value="1"/>
</dbReference>
<dbReference type="InterPro" id="IPR007454">
    <property type="entry name" value="UPF0250_YbeD-like"/>
</dbReference>
<dbReference type="InterPro" id="IPR027471">
    <property type="entry name" value="YbeD-like_sf"/>
</dbReference>
<dbReference type="NCBIfam" id="NF003447">
    <property type="entry name" value="PRK04998.1"/>
    <property type="match status" value="1"/>
</dbReference>
<dbReference type="PANTHER" id="PTHR38036">
    <property type="entry name" value="UPF0250 PROTEIN YBED"/>
    <property type="match status" value="1"/>
</dbReference>
<dbReference type="PANTHER" id="PTHR38036:SF1">
    <property type="entry name" value="UPF0250 PROTEIN YBED"/>
    <property type="match status" value="1"/>
</dbReference>
<dbReference type="Pfam" id="PF04359">
    <property type="entry name" value="DUF493"/>
    <property type="match status" value="1"/>
</dbReference>
<dbReference type="SUPFAM" id="SSF117991">
    <property type="entry name" value="YbeD/HP0495-like"/>
    <property type="match status" value="1"/>
</dbReference>
<protein>
    <recommendedName>
        <fullName evidence="1">UPF0250 protein YPA_2499</fullName>
    </recommendedName>
</protein>
<name>Y2499_YERPA</name>
<proteinExistence type="inferred from homology"/>
<feature type="chain" id="PRO_1000061911" description="UPF0250 protein YPA_2499">
    <location>
        <begin position="1"/>
        <end position="87"/>
    </location>
</feature>
<sequence>MKTKLNELLEFPCSFTYKVMGIAEPQLVDQVVEVVQRHAPGEYTPQVKPSSKGNYHSVSITITATHIDQVETLYEELGNLELVKMVL</sequence>
<reference key="1">
    <citation type="journal article" date="2006" name="J. Bacteriol.">
        <title>Complete genome sequence of Yersinia pestis strains Antiqua and Nepal516: evidence of gene reduction in an emerging pathogen.</title>
        <authorList>
            <person name="Chain P.S.G."/>
            <person name="Hu P."/>
            <person name="Malfatti S.A."/>
            <person name="Radnedge L."/>
            <person name="Larimer F."/>
            <person name="Vergez L.M."/>
            <person name="Worsham P."/>
            <person name="Chu M.C."/>
            <person name="Andersen G.L."/>
        </authorList>
    </citation>
    <scope>NUCLEOTIDE SEQUENCE [LARGE SCALE GENOMIC DNA]</scope>
    <source>
        <strain>Antiqua</strain>
    </source>
</reference>
<gene>
    <name type="ordered locus">YPA_2499</name>
</gene>
<organism>
    <name type="scientific">Yersinia pestis bv. Antiqua (strain Antiqua)</name>
    <dbReference type="NCBI Taxonomy" id="360102"/>
    <lineage>
        <taxon>Bacteria</taxon>
        <taxon>Pseudomonadati</taxon>
        <taxon>Pseudomonadota</taxon>
        <taxon>Gammaproteobacteria</taxon>
        <taxon>Enterobacterales</taxon>
        <taxon>Yersiniaceae</taxon>
        <taxon>Yersinia</taxon>
    </lineage>
</organism>
<evidence type="ECO:0000255" key="1">
    <source>
        <dbReference type="HAMAP-Rule" id="MF_00659"/>
    </source>
</evidence>